<organism>
    <name type="scientific">Xylella fastidiosa (strain 9a5c)</name>
    <dbReference type="NCBI Taxonomy" id="160492"/>
    <lineage>
        <taxon>Bacteria</taxon>
        <taxon>Pseudomonadati</taxon>
        <taxon>Pseudomonadota</taxon>
        <taxon>Gammaproteobacteria</taxon>
        <taxon>Lysobacterales</taxon>
        <taxon>Lysobacteraceae</taxon>
        <taxon>Xylella</taxon>
    </lineage>
</organism>
<dbReference type="EC" id="5.4.99.22"/>
<dbReference type="EMBL" id="AE003849">
    <property type="protein sequence ID" value="AAF85252.1"/>
    <property type="molecule type" value="Genomic_DNA"/>
</dbReference>
<dbReference type="PIR" id="A82555">
    <property type="entry name" value="A82555"/>
</dbReference>
<dbReference type="RefSeq" id="WP_010894897.1">
    <property type="nucleotide sequence ID" value="NC_002488.3"/>
</dbReference>
<dbReference type="SMR" id="Q9PAP2"/>
<dbReference type="STRING" id="160492.XF_2453"/>
<dbReference type="KEGG" id="xfa:XF_2453"/>
<dbReference type="PATRIC" id="fig|160492.11.peg.2603"/>
<dbReference type="eggNOG" id="COG1187">
    <property type="taxonomic scope" value="Bacteria"/>
</dbReference>
<dbReference type="HOGENOM" id="CLU_024979_5_2_6"/>
<dbReference type="Proteomes" id="UP000000812">
    <property type="component" value="Chromosome"/>
</dbReference>
<dbReference type="GO" id="GO:0160139">
    <property type="term" value="F:23S rRNA pseudouridine(2605) synthase activity"/>
    <property type="evidence" value="ECO:0007669"/>
    <property type="project" value="UniProtKB-EC"/>
</dbReference>
<dbReference type="GO" id="GO:0003723">
    <property type="term" value="F:RNA binding"/>
    <property type="evidence" value="ECO:0007669"/>
    <property type="project" value="UniProtKB-KW"/>
</dbReference>
<dbReference type="GO" id="GO:0000455">
    <property type="term" value="P:enzyme-directed rRNA pseudouridine synthesis"/>
    <property type="evidence" value="ECO:0007669"/>
    <property type="project" value="UniProtKB-ARBA"/>
</dbReference>
<dbReference type="CDD" id="cd00165">
    <property type="entry name" value="S4"/>
    <property type="match status" value="1"/>
</dbReference>
<dbReference type="FunFam" id="3.10.290.10:FF:000003">
    <property type="entry name" value="Pseudouridine synthase"/>
    <property type="match status" value="1"/>
</dbReference>
<dbReference type="FunFam" id="3.30.70.1560:FF:000001">
    <property type="entry name" value="Pseudouridine synthase"/>
    <property type="match status" value="1"/>
</dbReference>
<dbReference type="FunFam" id="3.30.70.580:FF:000009">
    <property type="entry name" value="Pseudouridine synthase"/>
    <property type="match status" value="1"/>
</dbReference>
<dbReference type="Gene3D" id="3.30.70.1560">
    <property type="entry name" value="Alpha-L RNA-binding motif"/>
    <property type="match status" value="1"/>
</dbReference>
<dbReference type="Gene3D" id="3.30.70.580">
    <property type="entry name" value="Pseudouridine synthase I, catalytic domain, N-terminal subdomain"/>
    <property type="match status" value="1"/>
</dbReference>
<dbReference type="Gene3D" id="3.10.290.10">
    <property type="entry name" value="RNA-binding S4 domain"/>
    <property type="match status" value="1"/>
</dbReference>
<dbReference type="InterPro" id="IPR042092">
    <property type="entry name" value="PsdUridine_s_RsuA/RluB/E/F_cat"/>
</dbReference>
<dbReference type="InterPro" id="IPR020103">
    <property type="entry name" value="PsdUridine_synth_cat_dom_sf"/>
</dbReference>
<dbReference type="InterPro" id="IPR006145">
    <property type="entry name" value="PsdUridine_synth_RsuA/RluA"/>
</dbReference>
<dbReference type="InterPro" id="IPR000748">
    <property type="entry name" value="PsdUridine_synth_RsuA/RluB/E/F"/>
</dbReference>
<dbReference type="InterPro" id="IPR018496">
    <property type="entry name" value="PsdUridine_synth_RsuA/RluB_CS"/>
</dbReference>
<dbReference type="InterPro" id="IPR050343">
    <property type="entry name" value="RsuA_PseudoU_synthase"/>
</dbReference>
<dbReference type="InterPro" id="IPR002942">
    <property type="entry name" value="S4_RNA-bd"/>
</dbReference>
<dbReference type="InterPro" id="IPR036986">
    <property type="entry name" value="S4_RNA-bd_sf"/>
</dbReference>
<dbReference type="InterPro" id="IPR020094">
    <property type="entry name" value="TruA/RsuA/RluB/E/F_N"/>
</dbReference>
<dbReference type="NCBIfam" id="NF007976">
    <property type="entry name" value="PRK10700.1"/>
    <property type="match status" value="1"/>
</dbReference>
<dbReference type="NCBIfam" id="TIGR00093">
    <property type="entry name" value="pseudouridine synthase"/>
    <property type="match status" value="1"/>
</dbReference>
<dbReference type="PANTHER" id="PTHR47683">
    <property type="entry name" value="PSEUDOURIDINE SYNTHASE FAMILY PROTEIN-RELATED"/>
    <property type="match status" value="1"/>
</dbReference>
<dbReference type="PANTHER" id="PTHR47683:SF3">
    <property type="entry name" value="RIBOSOMAL LARGE SUBUNIT PSEUDOURIDINE SYNTHASE B"/>
    <property type="match status" value="1"/>
</dbReference>
<dbReference type="Pfam" id="PF00849">
    <property type="entry name" value="PseudoU_synth_2"/>
    <property type="match status" value="1"/>
</dbReference>
<dbReference type="Pfam" id="PF01479">
    <property type="entry name" value="S4"/>
    <property type="match status" value="1"/>
</dbReference>
<dbReference type="SMART" id="SM00363">
    <property type="entry name" value="S4"/>
    <property type="match status" value="1"/>
</dbReference>
<dbReference type="SUPFAM" id="SSF55174">
    <property type="entry name" value="Alpha-L RNA-binding motif"/>
    <property type="match status" value="1"/>
</dbReference>
<dbReference type="SUPFAM" id="SSF55120">
    <property type="entry name" value="Pseudouridine synthase"/>
    <property type="match status" value="1"/>
</dbReference>
<dbReference type="PROSITE" id="PS01149">
    <property type="entry name" value="PSI_RSU"/>
    <property type="match status" value="1"/>
</dbReference>
<dbReference type="PROSITE" id="PS50889">
    <property type="entry name" value="S4"/>
    <property type="match status" value="1"/>
</dbReference>
<sequence length="476" mass="53218">MSDTPKPPSNTLSLKRETATEAPKLEERLHKVLAQAGLGSRRALEQRISNGLIKVNGDIAQLGMSVKSGDKIELDGRSFVASALTEPARVLIYNKPEGEVTTREDPEGRPTVFETLPVLKGARWIAIGRLDINTTGLLLLTTDGELANAMMHPSSEIEREYVVRVRSPEGEEHVQDELLEQLTRGVMLEDGTAKFDTIERIGNTDSHDWFRVVVKEGRNREVRRLWESQGCQVSRLKRTRYGSVLLPRELLRGQSTELPKTQVEALRTQLKLEKDMPLALTLQPIIGQRRSAKATLHVNRNDNNKHAYHNNHSTADESRELRRFDTLRDDRGRGQGKHHFKDRLTVSGEAAAKQAHKPFKQYKPKNDRSLSEGSPATFQSWYVPEGVSTGPRNHRNAGAGNGAHPNKKSPNPNTRNTPGQQTRKSPYKYPNNAPNFPSDHATPTFNPYGNPGQKTGAGRPNNSGGKYNRNRGPRYP</sequence>
<proteinExistence type="inferred from homology"/>
<protein>
    <recommendedName>
        <fullName>Ribosomal large subunit pseudouridine synthase B</fullName>
        <ecNumber>5.4.99.22</ecNumber>
    </recommendedName>
    <alternativeName>
        <fullName>23S rRNA pseudouridine(2605) synthase</fullName>
    </alternativeName>
    <alternativeName>
        <fullName>rRNA pseudouridylate synthase B</fullName>
    </alternativeName>
    <alternativeName>
        <fullName>rRNA-uridine isomerase B</fullName>
    </alternativeName>
</protein>
<accession>Q9PAP2</accession>
<name>RLUB_XYLFA</name>
<feature type="chain" id="PRO_0000099997" description="Ribosomal large subunit pseudouridine synthase B">
    <location>
        <begin position="1"/>
        <end position="476"/>
    </location>
</feature>
<feature type="domain" description="S4 RNA-binding" evidence="2">
    <location>
        <begin position="27"/>
        <end position="96"/>
    </location>
</feature>
<feature type="region of interest" description="Disordered" evidence="3">
    <location>
        <begin position="299"/>
        <end position="476"/>
    </location>
</feature>
<feature type="compositionally biased region" description="Basic and acidic residues" evidence="3">
    <location>
        <begin position="314"/>
        <end position="333"/>
    </location>
</feature>
<feature type="compositionally biased region" description="Basic residues" evidence="3">
    <location>
        <begin position="354"/>
        <end position="363"/>
    </location>
</feature>
<feature type="compositionally biased region" description="Polar residues" evidence="3">
    <location>
        <begin position="371"/>
        <end position="380"/>
    </location>
</feature>
<feature type="compositionally biased region" description="Polar residues" evidence="3">
    <location>
        <begin position="408"/>
        <end position="424"/>
    </location>
</feature>
<feature type="active site" description="Nucleophile" evidence="1">
    <location>
        <position position="131"/>
    </location>
</feature>
<comment type="function">
    <text evidence="1">Responsible for synthesis of pseudouridine from uracil-2605 in 23S ribosomal RNA.</text>
</comment>
<comment type="catalytic activity">
    <reaction>
        <text>uridine(2605) in 23S rRNA = pseudouridine(2605) in 23S rRNA</text>
        <dbReference type="Rhea" id="RHEA:42520"/>
        <dbReference type="Rhea" id="RHEA-COMP:10095"/>
        <dbReference type="Rhea" id="RHEA-COMP:10096"/>
        <dbReference type="ChEBI" id="CHEBI:65314"/>
        <dbReference type="ChEBI" id="CHEBI:65315"/>
        <dbReference type="EC" id="5.4.99.22"/>
    </reaction>
</comment>
<comment type="similarity">
    <text evidence="4">Belongs to the pseudouridine synthase RsuA family.</text>
</comment>
<reference key="1">
    <citation type="journal article" date="2000" name="Nature">
        <title>The genome sequence of the plant pathogen Xylella fastidiosa.</title>
        <authorList>
            <person name="Simpson A.J.G."/>
            <person name="Reinach F.C."/>
            <person name="Arruda P."/>
            <person name="Abreu F.A."/>
            <person name="Acencio M."/>
            <person name="Alvarenga R."/>
            <person name="Alves L.M.C."/>
            <person name="Araya J.E."/>
            <person name="Baia G.S."/>
            <person name="Baptista C.S."/>
            <person name="Barros M.H."/>
            <person name="Bonaccorsi E.D."/>
            <person name="Bordin S."/>
            <person name="Bove J.M."/>
            <person name="Briones M.R.S."/>
            <person name="Bueno M.R.P."/>
            <person name="Camargo A.A."/>
            <person name="Camargo L.E.A."/>
            <person name="Carraro D.M."/>
            <person name="Carrer H."/>
            <person name="Colauto N.B."/>
            <person name="Colombo C."/>
            <person name="Costa F.F."/>
            <person name="Costa M.C.R."/>
            <person name="Costa-Neto C.M."/>
            <person name="Coutinho L.L."/>
            <person name="Cristofani M."/>
            <person name="Dias-Neto E."/>
            <person name="Docena C."/>
            <person name="El-Dorry H."/>
            <person name="Facincani A.P."/>
            <person name="Ferreira A.J.S."/>
            <person name="Ferreira V.C.A."/>
            <person name="Ferro J.A."/>
            <person name="Fraga J.S."/>
            <person name="Franca S.C."/>
            <person name="Franco M.C."/>
            <person name="Frohme M."/>
            <person name="Furlan L.R."/>
            <person name="Garnier M."/>
            <person name="Goldman G.H."/>
            <person name="Goldman M.H.S."/>
            <person name="Gomes S.L."/>
            <person name="Gruber A."/>
            <person name="Ho P.L."/>
            <person name="Hoheisel J.D."/>
            <person name="Junqueira M.L."/>
            <person name="Kemper E.L."/>
            <person name="Kitajima J.P."/>
            <person name="Krieger J.E."/>
            <person name="Kuramae E.E."/>
            <person name="Laigret F."/>
            <person name="Lambais M.R."/>
            <person name="Leite L.C.C."/>
            <person name="Lemos E.G.M."/>
            <person name="Lemos M.V.F."/>
            <person name="Lopes S.A."/>
            <person name="Lopes C.R."/>
            <person name="Machado J.A."/>
            <person name="Machado M.A."/>
            <person name="Madeira A.M.B.N."/>
            <person name="Madeira H.M.F."/>
            <person name="Marino C.L."/>
            <person name="Marques M.V."/>
            <person name="Martins E.A.L."/>
            <person name="Martins E.M.F."/>
            <person name="Matsukuma A.Y."/>
            <person name="Menck C.F.M."/>
            <person name="Miracca E.C."/>
            <person name="Miyaki C.Y."/>
            <person name="Monteiro-Vitorello C.B."/>
            <person name="Moon D.H."/>
            <person name="Nagai M.A."/>
            <person name="Nascimento A.L.T.O."/>
            <person name="Netto L.E.S."/>
            <person name="Nhani A. Jr."/>
            <person name="Nobrega F.G."/>
            <person name="Nunes L.R."/>
            <person name="Oliveira M.A."/>
            <person name="de Oliveira M.C."/>
            <person name="de Oliveira R.C."/>
            <person name="Palmieri D.A."/>
            <person name="Paris A."/>
            <person name="Peixoto B.R."/>
            <person name="Pereira G.A.G."/>
            <person name="Pereira H.A. Jr."/>
            <person name="Pesquero J.B."/>
            <person name="Quaggio R.B."/>
            <person name="Roberto P.G."/>
            <person name="Rodrigues V."/>
            <person name="de Rosa A.J.M."/>
            <person name="de Rosa V.E. Jr."/>
            <person name="de Sa R.G."/>
            <person name="Santelli R.V."/>
            <person name="Sawasaki H.E."/>
            <person name="da Silva A.C.R."/>
            <person name="da Silva A.M."/>
            <person name="da Silva F.R."/>
            <person name="Silva W.A. Jr."/>
            <person name="da Silveira J.F."/>
            <person name="Silvestri M.L.Z."/>
            <person name="Siqueira W.J."/>
            <person name="de Souza A.A."/>
            <person name="de Souza A.P."/>
            <person name="Terenzi M.F."/>
            <person name="Truffi D."/>
            <person name="Tsai S.M."/>
            <person name="Tsuhako M.H."/>
            <person name="Vallada H."/>
            <person name="Van Sluys M.A."/>
            <person name="Verjovski-Almeida S."/>
            <person name="Vettore A.L."/>
            <person name="Zago M.A."/>
            <person name="Zatz M."/>
            <person name="Meidanis J."/>
            <person name="Setubal J.C."/>
        </authorList>
    </citation>
    <scope>NUCLEOTIDE SEQUENCE [LARGE SCALE GENOMIC DNA]</scope>
    <source>
        <strain>9a5c</strain>
    </source>
</reference>
<evidence type="ECO:0000250" key="1"/>
<evidence type="ECO:0000255" key="2">
    <source>
        <dbReference type="PROSITE-ProRule" id="PRU00182"/>
    </source>
</evidence>
<evidence type="ECO:0000256" key="3">
    <source>
        <dbReference type="SAM" id="MobiDB-lite"/>
    </source>
</evidence>
<evidence type="ECO:0000305" key="4"/>
<keyword id="KW-0413">Isomerase</keyword>
<keyword id="KW-0694">RNA-binding</keyword>
<keyword id="KW-0698">rRNA processing</keyword>
<gene>
    <name type="primary">rluB</name>
    <name type="ordered locus">XF_2453</name>
</gene>